<protein>
    <recommendedName>
        <fullName>Protein NrdI</fullName>
    </recommendedName>
</protein>
<geneLocation type="plasmid">
    <name>megaplasmid MP1</name>
</geneLocation>
<feature type="chain" id="PRO_0000164313" description="Protein NrdI">
    <location>
        <begin position="1"/>
        <end position="141"/>
    </location>
</feature>
<keyword id="KW-0614">Plasmid</keyword>
<keyword id="KW-1185">Reference proteome</keyword>
<gene>
    <name type="primary">nrdI</name>
    <name type="ordered locus">DR_B0107</name>
</gene>
<accession>Q9RZL8</accession>
<organism>
    <name type="scientific">Deinococcus radiodurans (strain ATCC 13939 / DSM 20539 / JCM 16871 / CCUG 27074 / LMG 4051 / NBRC 15346 / NCIMB 9279 / VKM B-1422 / R1)</name>
    <dbReference type="NCBI Taxonomy" id="243230"/>
    <lineage>
        <taxon>Bacteria</taxon>
        <taxon>Thermotogati</taxon>
        <taxon>Deinococcota</taxon>
        <taxon>Deinococci</taxon>
        <taxon>Deinococcales</taxon>
        <taxon>Deinococcaceae</taxon>
        <taxon>Deinococcus</taxon>
    </lineage>
</organism>
<name>NRDI_DEIRA</name>
<comment type="function">
    <text evidence="1">Probably involved in ribonucleotide reductase function.</text>
</comment>
<comment type="similarity">
    <text evidence="2">Belongs to the NrdI family.</text>
</comment>
<evidence type="ECO:0000250" key="1"/>
<evidence type="ECO:0000305" key="2"/>
<reference key="1">
    <citation type="journal article" date="1999" name="Science">
        <title>Genome sequence of the radioresistant bacterium Deinococcus radiodurans R1.</title>
        <authorList>
            <person name="White O."/>
            <person name="Eisen J.A."/>
            <person name="Heidelberg J.F."/>
            <person name="Hickey E.K."/>
            <person name="Peterson J.D."/>
            <person name="Dodson R.J."/>
            <person name="Haft D.H."/>
            <person name="Gwinn M.L."/>
            <person name="Nelson W.C."/>
            <person name="Richardson D.L."/>
            <person name="Moffat K.S."/>
            <person name="Qin H."/>
            <person name="Jiang L."/>
            <person name="Pamphile W."/>
            <person name="Crosby M."/>
            <person name="Shen M."/>
            <person name="Vamathevan J.J."/>
            <person name="Lam P."/>
            <person name="McDonald L.A."/>
            <person name="Utterback T.R."/>
            <person name="Zalewski C."/>
            <person name="Makarova K.S."/>
            <person name="Aravind L."/>
            <person name="Daly M.J."/>
            <person name="Minton K.W."/>
            <person name="Fleischmann R.D."/>
            <person name="Ketchum K.A."/>
            <person name="Nelson K.E."/>
            <person name="Salzberg S.L."/>
            <person name="Smith H.O."/>
            <person name="Venter J.C."/>
            <person name="Fraser C.M."/>
        </authorList>
    </citation>
    <scope>NUCLEOTIDE SEQUENCE [LARGE SCALE GENOMIC DNA]</scope>
    <source>
        <strain>ATCC 13939 / DSM 20539 / JCM 16871 / CCUG 27074 / LMG 4051 / NBRC 15346 / NCIMB 9279 / VKM B-1422 / R1</strain>
    </source>
</reference>
<proteinExistence type="inferred from homology"/>
<sequence length="141" mass="15309">MLRLVYDSLTGNVRHFAETLAAELHVSPMRVQDPAPTDAYLLLTYTFGSGEVPASTRRLLTTHGHLLRGVVASGSYHWGHNFARAADVIAAEYRVPVVAKLNKGGTAADRAAVRRWLLHYAESAPPFPTSCTGEPTPWNAG</sequence>
<dbReference type="EMBL" id="AE001826">
    <property type="protein sequence ID" value="AAF12546.1"/>
    <property type="molecule type" value="Genomic_DNA"/>
</dbReference>
<dbReference type="PIR" id="H75629">
    <property type="entry name" value="H75629"/>
</dbReference>
<dbReference type="RefSeq" id="NP_051639.1">
    <property type="nucleotide sequence ID" value="NC_000958.1"/>
</dbReference>
<dbReference type="RefSeq" id="WP_010883964.1">
    <property type="nucleotide sequence ID" value="NC_000958.1"/>
</dbReference>
<dbReference type="SMR" id="Q9RZL8"/>
<dbReference type="FunCoup" id="Q9RZL8">
    <property type="interactions" value="20"/>
</dbReference>
<dbReference type="EnsemblBacteria" id="AAF12546">
    <property type="protein sequence ID" value="AAF12546"/>
    <property type="gene ID" value="DR_B0107"/>
</dbReference>
<dbReference type="GeneID" id="69519357"/>
<dbReference type="KEGG" id="dra:DR_B0107"/>
<dbReference type="PATRIC" id="fig|243230.17.peg.105"/>
<dbReference type="HOGENOM" id="CLU_114845_3_0_0"/>
<dbReference type="InParanoid" id="Q9RZL8"/>
<dbReference type="OrthoDB" id="350535at2"/>
<dbReference type="Proteomes" id="UP000002524">
    <property type="component" value="Plasmid MP1"/>
</dbReference>
<dbReference type="GO" id="GO:0010181">
    <property type="term" value="F:FMN binding"/>
    <property type="evidence" value="ECO:0000318"/>
    <property type="project" value="GO_Central"/>
</dbReference>
<dbReference type="GO" id="GO:0036211">
    <property type="term" value="P:protein modification process"/>
    <property type="evidence" value="ECO:0007669"/>
    <property type="project" value="InterPro"/>
</dbReference>
<dbReference type="Gene3D" id="3.40.50.360">
    <property type="match status" value="1"/>
</dbReference>
<dbReference type="HAMAP" id="MF_00128">
    <property type="entry name" value="NrdI"/>
    <property type="match status" value="1"/>
</dbReference>
<dbReference type="InterPro" id="IPR029039">
    <property type="entry name" value="Flavoprotein-like_sf"/>
</dbReference>
<dbReference type="InterPro" id="IPR020852">
    <property type="entry name" value="RNR_Ib_NrdI_bac"/>
</dbReference>
<dbReference type="InterPro" id="IPR004465">
    <property type="entry name" value="RNR_NrdI"/>
</dbReference>
<dbReference type="NCBIfam" id="TIGR00333">
    <property type="entry name" value="nrdI"/>
    <property type="match status" value="1"/>
</dbReference>
<dbReference type="PANTHER" id="PTHR37297">
    <property type="entry name" value="PROTEIN NRDI"/>
    <property type="match status" value="1"/>
</dbReference>
<dbReference type="PANTHER" id="PTHR37297:SF1">
    <property type="entry name" value="PROTEIN NRDI"/>
    <property type="match status" value="1"/>
</dbReference>
<dbReference type="Pfam" id="PF07972">
    <property type="entry name" value="Flavodoxin_NdrI"/>
    <property type="match status" value="1"/>
</dbReference>
<dbReference type="PIRSF" id="PIRSF005087">
    <property type="entry name" value="NrdI"/>
    <property type="match status" value="1"/>
</dbReference>
<dbReference type="SUPFAM" id="SSF52218">
    <property type="entry name" value="Flavoproteins"/>
    <property type="match status" value="1"/>
</dbReference>